<name>SUCC_ACIF5</name>
<sequence length="387" mass="41363">MNLHEYQAKRLLAEEGVPVPRAIPAFSVREAVNQARELGGPAWVVKAQVHAGGRGKAGGVRMVDSIAQVEKAAQELLGKPLVTAQTGPQGQHVAALLIEEPSRIARELYLALMVDRGQARITFLATREGGVDIEELAASRPEALHRVVVEPSTGFLPFQARQLGFQFGLDAGQVQQLTRIMQGMYRLAQRLDALMVEINPLAITAEGRLLALDAKVVMDDNALYRHPESDELFDSTQQDGREITARQFGLNYISLEGNIGCMVNGAGLAMATMDLIKLHGGEPANFLDVGGGAAADKVNQAFKLILSDTRVKAILVNIFGGITRCDLLAEGIIQAAAEVGLHLPVVVRLEGTRKEEGMALLRESGLSLITADGLTDAAMKAVAAAQG</sequence>
<reference key="1">
    <citation type="submission" date="2008-08" db="EMBL/GenBank/DDBJ databases">
        <title>Complete sequence of Acidithiobacillus ferrooxidans ATCC 53993.</title>
        <authorList>
            <person name="Lucas S."/>
            <person name="Copeland A."/>
            <person name="Lapidus A."/>
            <person name="Glavina del Rio T."/>
            <person name="Dalin E."/>
            <person name="Tice H."/>
            <person name="Bruce D."/>
            <person name="Goodwin L."/>
            <person name="Pitluck S."/>
            <person name="Sims D."/>
            <person name="Brettin T."/>
            <person name="Detter J.C."/>
            <person name="Han C."/>
            <person name="Kuske C.R."/>
            <person name="Larimer F."/>
            <person name="Land M."/>
            <person name="Hauser L."/>
            <person name="Kyrpides N."/>
            <person name="Lykidis A."/>
            <person name="Borole A.P."/>
        </authorList>
    </citation>
    <scope>NUCLEOTIDE SEQUENCE [LARGE SCALE GENOMIC DNA]</scope>
    <source>
        <strain>ATCC 53993 / BNL-5-31</strain>
    </source>
</reference>
<dbReference type="EC" id="6.2.1.5" evidence="1"/>
<dbReference type="EMBL" id="CP001132">
    <property type="protein sequence ID" value="ACH82841.1"/>
    <property type="molecule type" value="Genomic_DNA"/>
</dbReference>
<dbReference type="RefSeq" id="WP_009564695.1">
    <property type="nucleotide sequence ID" value="NC_011206.1"/>
</dbReference>
<dbReference type="SMR" id="B5EMG2"/>
<dbReference type="GeneID" id="65279797"/>
<dbReference type="KEGG" id="afe:Lferr_0587"/>
<dbReference type="eggNOG" id="COG0045">
    <property type="taxonomic scope" value="Bacteria"/>
</dbReference>
<dbReference type="HOGENOM" id="CLU_037430_0_2_6"/>
<dbReference type="UniPathway" id="UPA00223">
    <property type="reaction ID" value="UER00999"/>
</dbReference>
<dbReference type="GO" id="GO:0005829">
    <property type="term" value="C:cytosol"/>
    <property type="evidence" value="ECO:0007669"/>
    <property type="project" value="TreeGrafter"/>
</dbReference>
<dbReference type="GO" id="GO:0042709">
    <property type="term" value="C:succinate-CoA ligase complex"/>
    <property type="evidence" value="ECO:0007669"/>
    <property type="project" value="TreeGrafter"/>
</dbReference>
<dbReference type="GO" id="GO:0005524">
    <property type="term" value="F:ATP binding"/>
    <property type="evidence" value="ECO:0007669"/>
    <property type="project" value="UniProtKB-UniRule"/>
</dbReference>
<dbReference type="GO" id="GO:0000287">
    <property type="term" value="F:magnesium ion binding"/>
    <property type="evidence" value="ECO:0007669"/>
    <property type="project" value="UniProtKB-UniRule"/>
</dbReference>
<dbReference type="GO" id="GO:0004775">
    <property type="term" value="F:succinate-CoA ligase (ADP-forming) activity"/>
    <property type="evidence" value="ECO:0007669"/>
    <property type="project" value="UniProtKB-UniRule"/>
</dbReference>
<dbReference type="GO" id="GO:0004776">
    <property type="term" value="F:succinate-CoA ligase (GDP-forming) activity"/>
    <property type="evidence" value="ECO:0007669"/>
    <property type="project" value="RHEA"/>
</dbReference>
<dbReference type="GO" id="GO:0006104">
    <property type="term" value="P:succinyl-CoA metabolic process"/>
    <property type="evidence" value="ECO:0007669"/>
    <property type="project" value="TreeGrafter"/>
</dbReference>
<dbReference type="GO" id="GO:0006099">
    <property type="term" value="P:tricarboxylic acid cycle"/>
    <property type="evidence" value="ECO:0007669"/>
    <property type="project" value="UniProtKB-UniRule"/>
</dbReference>
<dbReference type="FunFam" id="3.30.1490.20:FF:000002">
    <property type="entry name" value="Succinate--CoA ligase [ADP-forming] subunit beta"/>
    <property type="match status" value="1"/>
</dbReference>
<dbReference type="FunFam" id="3.30.470.20:FF:000002">
    <property type="entry name" value="Succinate--CoA ligase [ADP-forming] subunit beta"/>
    <property type="match status" value="1"/>
</dbReference>
<dbReference type="FunFam" id="3.40.50.261:FF:000001">
    <property type="entry name" value="Succinate--CoA ligase [ADP-forming] subunit beta"/>
    <property type="match status" value="1"/>
</dbReference>
<dbReference type="Gene3D" id="3.30.1490.20">
    <property type="entry name" value="ATP-grasp fold, A domain"/>
    <property type="match status" value="1"/>
</dbReference>
<dbReference type="Gene3D" id="3.30.470.20">
    <property type="entry name" value="ATP-grasp fold, B domain"/>
    <property type="match status" value="1"/>
</dbReference>
<dbReference type="Gene3D" id="3.40.50.261">
    <property type="entry name" value="Succinyl-CoA synthetase domains"/>
    <property type="match status" value="1"/>
</dbReference>
<dbReference type="HAMAP" id="MF_00558">
    <property type="entry name" value="Succ_CoA_beta"/>
    <property type="match status" value="1"/>
</dbReference>
<dbReference type="InterPro" id="IPR011761">
    <property type="entry name" value="ATP-grasp"/>
</dbReference>
<dbReference type="InterPro" id="IPR013650">
    <property type="entry name" value="ATP-grasp_succ-CoA_synth-type"/>
</dbReference>
<dbReference type="InterPro" id="IPR013815">
    <property type="entry name" value="ATP_grasp_subdomain_1"/>
</dbReference>
<dbReference type="InterPro" id="IPR017866">
    <property type="entry name" value="Succ-CoA_synthase_bsu_CS"/>
</dbReference>
<dbReference type="InterPro" id="IPR005811">
    <property type="entry name" value="SUCC_ACL_C"/>
</dbReference>
<dbReference type="InterPro" id="IPR005809">
    <property type="entry name" value="Succ_CoA_ligase-like_bsu"/>
</dbReference>
<dbReference type="InterPro" id="IPR016102">
    <property type="entry name" value="Succinyl-CoA_synth-like"/>
</dbReference>
<dbReference type="NCBIfam" id="NF001913">
    <property type="entry name" value="PRK00696.1"/>
    <property type="match status" value="1"/>
</dbReference>
<dbReference type="NCBIfam" id="TIGR01016">
    <property type="entry name" value="sucCoAbeta"/>
    <property type="match status" value="1"/>
</dbReference>
<dbReference type="PANTHER" id="PTHR11815:SF10">
    <property type="entry name" value="SUCCINATE--COA LIGASE [GDP-FORMING] SUBUNIT BETA, MITOCHONDRIAL"/>
    <property type="match status" value="1"/>
</dbReference>
<dbReference type="PANTHER" id="PTHR11815">
    <property type="entry name" value="SUCCINYL-COA SYNTHETASE BETA CHAIN"/>
    <property type="match status" value="1"/>
</dbReference>
<dbReference type="Pfam" id="PF08442">
    <property type="entry name" value="ATP-grasp_2"/>
    <property type="match status" value="1"/>
</dbReference>
<dbReference type="Pfam" id="PF00549">
    <property type="entry name" value="Ligase_CoA"/>
    <property type="match status" value="1"/>
</dbReference>
<dbReference type="PIRSF" id="PIRSF001554">
    <property type="entry name" value="SucCS_beta"/>
    <property type="match status" value="1"/>
</dbReference>
<dbReference type="SUPFAM" id="SSF56059">
    <property type="entry name" value="Glutathione synthetase ATP-binding domain-like"/>
    <property type="match status" value="1"/>
</dbReference>
<dbReference type="SUPFAM" id="SSF52210">
    <property type="entry name" value="Succinyl-CoA synthetase domains"/>
    <property type="match status" value="1"/>
</dbReference>
<dbReference type="PROSITE" id="PS50975">
    <property type="entry name" value="ATP_GRASP"/>
    <property type="match status" value="1"/>
</dbReference>
<dbReference type="PROSITE" id="PS01217">
    <property type="entry name" value="SUCCINYL_COA_LIG_3"/>
    <property type="match status" value="1"/>
</dbReference>
<organism>
    <name type="scientific">Acidithiobacillus ferrooxidans (strain ATCC 53993 / BNL-5-31)</name>
    <name type="common">Leptospirillum ferrooxidans (ATCC 53993)</name>
    <dbReference type="NCBI Taxonomy" id="380394"/>
    <lineage>
        <taxon>Bacteria</taxon>
        <taxon>Pseudomonadati</taxon>
        <taxon>Pseudomonadota</taxon>
        <taxon>Acidithiobacillia</taxon>
        <taxon>Acidithiobacillales</taxon>
        <taxon>Acidithiobacillaceae</taxon>
        <taxon>Acidithiobacillus</taxon>
    </lineage>
</organism>
<protein>
    <recommendedName>
        <fullName evidence="1">Succinate--CoA ligase [ADP-forming] subunit beta</fullName>
        <ecNumber evidence="1">6.2.1.5</ecNumber>
    </recommendedName>
    <alternativeName>
        <fullName evidence="1">Succinyl-CoA synthetase subunit beta</fullName>
        <shortName evidence="1">SCS-beta</shortName>
    </alternativeName>
</protein>
<proteinExistence type="inferred from homology"/>
<comment type="function">
    <text evidence="1">Succinyl-CoA synthetase functions in the citric acid cycle (TCA), coupling the hydrolysis of succinyl-CoA to the synthesis of either ATP or GTP and thus represents the only step of substrate-level phosphorylation in the TCA. The beta subunit provides nucleotide specificity of the enzyme and binds the substrate succinate, while the binding sites for coenzyme A and phosphate are found in the alpha subunit.</text>
</comment>
<comment type="catalytic activity">
    <reaction evidence="1">
        <text>succinate + ATP + CoA = succinyl-CoA + ADP + phosphate</text>
        <dbReference type="Rhea" id="RHEA:17661"/>
        <dbReference type="ChEBI" id="CHEBI:30031"/>
        <dbReference type="ChEBI" id="CHEBI:30616"/>
        <dbReference type="ChEBI" id="CHEBI:43474"/>
        <dbReference type="ChEBI" id="CHEBI:57287"/>
        <dbReference type="ChEBI" id="CHEBI:57292"/>
        <dbReference type="ChEBI" id="CHEBI:456216"/>
        <dbReference type="EC" id="6.2.1.5"/>
    </reaction>
    <physiologicalReaction direction="right-to-left" evidence="1">
        <dbReference type="Rhea" id="RHEA:17663"/>
    </physiologicalReaction>
</comment>
<comment type="catalytic activity">
    <reaction evidence="1">
        <text>GTP + succinate + CoA = succinyl-CoA + GDP + phosphate</text>
        <dbReference type="Rhea" id="RHEA:22120"/>
        <dbReference type="ChEBI" id="CHEBI:30031"/>
        <dbReference type="ChEBI" id="CHEBI:37565"/>
        <dbReference type="ChEBI" id="CHEBI:43474"/>
        <dbReference type="ChEBI" id="CHEBI:57287"/>
        <dbReference type="ChEBI" id="CHEBI:57292"/>
        <dbReference type="ChEBI" id="CHEBI:58189"/>
    </reaction>
    <physiologicalReaction direction="right-to-left" evidence="1">
        <dbReference type="Rhea" id="RHEA:22122"/>
    </physiologicalReaction>
</comment>
<comment type="cofactor">
    <cofactor evidence="1">
        <name>Mg(2+)</name>
        <dbReference type="ChEBI" id="CHEBI:18420"/>
    </cofactor>
    <text evidence="1">Binds 1 Mg(2+) ion per subunit.</text>
</comment>
<comment type="pathway">
    <text evidence="1">Carbohydrate metabolism; tricarboxylic acid cycle; succinate from succinyl-CoA (ligase route): step 1/1.</text>
</comment>
<comment type="subunit">
    <text evidence="1">Heterotetramer of two alpha and two beta subunits.</text>
</comment>
<comment type="similarity">
    <text evidence="1">Belongs to the succinate/malate CoA ligase beta subunit family.</text>
</comment>
<keyword id="KW-0067">ATP-binding</keyword>
<keyword id="KW-0436">Ligase</keyword>
<keyword id="KW-0460">Magnesium</keyword>
<keyword id="KW-0479">Metal-binding</keyword>
<keyword id="KW-0547">Nucleotide-binding</keyword>
<keyword id="KW-0816">Tricarboxylic acid cycle</keyword>
<accession>B5EMG2</accession>
<gene>
    <name evidence="1" type="primary">sucC</name>
    <name type="ordered locus">Lferr_0587</name>
</gene>
<feature type="chain" id="PRO_1000129152" description="Succinate--CoA ligase [ADP-forming] subunit beta">
    <location>
        <begin position="1"/>
        <end position="387"/>
    </location>
</feature>
<feature type="domain" description="ATP-grasp" evidence="1">
    <location>
        <begin position="9"/>
        <end position="244"/>
    </location>
</feature>
<feature type="binding site" evidence="1">
    <location>
        <position position="46"/>
    </location>
    <ligand>
        <name>ATP</name>
        <dbReference type="ChEBI" id="CHEBI:30616"/>
    </ligand>
</feature>
<feature type="binding site" evidence="1">
    <location>
        <begin position="53"/>
        <end position="55"/>
    </location>
    <ligand>
        <name>ATP</name>
        <dbReference type="ChEBI" id="CHEBI:30616"/>
    </ligand>
</feature>
<feature type="binding site" evidence="1">
    <location>
        <position position="99"/>
    </location>
    <ligand>
        <name>ATP</name>
        <dbReference type="ChEBI" id="CHEBI:30616"/>
    </ligand>
</feature>
<feature type="binding site" evidence="1">
    <location>
        <position position="102"/>
    </location>
    <ligand>
        <name>ATP</name>
        <dbReference type="ChEBI" id="CHEBI:30616"/>
    </ligand>
</feature>
<feature type="binding site" evidence="1">
    <location>
        <position position="107"/>
    </location>
    <ligand>
        <name>ATP</name>
        <dbReference type="ChEBI" id="CHEBI:30616"/>
    </ligand>
</feature>
<feature type="binding site" evidence="1">
    <location>
        <position position="199"/>
    </location>
    <ligand>
        <name>Mg(2+)</name>
        <dbReference type="ChEBI" id="CHEBI:18420"/>
    </ligand>
</feature>
<feature type="binding site" evidence="1">
    <location>
        <position position="213"/>
    </location>
    <ligand>
        <name>Mg(2+)</name>
        <dbReference type="ChEBI" id="CHEBI:18420"/>
    </ligand>
</feature>
<feature type="binding site" evidence="1">
    <location>
        <position position="264"/>
    </location>
    <ligand>
        <name>substrate</name>
        <note>ligand shared with subunit alpha</note>
    </ligand>
</feature>
<feature type="binding site" evidence="1">
    <location>
        <begin position="321"/>
        <end position="323"/>
    </location>
    <ligand>
        <name>substrate</name>
        <note>ligand shared with subunit alpha</note>
    </ligand>
</feature>
<evidence type="ECO:0000255" key="1">
    <source>
        <dbReference type="HAMAP-Rule" id="MF_00558"/>
    </source>
</evidence>